<protein>
    <recommendedName>
        <fullName evidence="1">Nuclear export protein</fullName>
        <shortName evidence="1">NEP</shortName>
    </recommendedName>
    <alternativeName>
        <fullName evidence="1">Non-structural protein 2</fullName>
        <shortName evidence="1">NS2</shortName>
    </alternativeName>
</protein>
<organismHost>
    <name type="scientific">Aves</name>
    <dbReference type="NCBI Taxonomy" id="8782"/>
</organismHost>
<organismHost>
    <name type="scientific">Homo sapiens</name>
    <name type="common">Human</name>
    <dbReference type="NCBI Taxonomy" id="9606"/>
</organismHost>
<organismHost>
    <name type="scientific">Sus scrofa</name>
    <name type="common">Pig</name>
    <dbReference type="NCBI Taxonomy" id="9823"/>
</organismHost>
<name>NEP_I43A0</name>
<comment type="function">
    <text evidence="1">Mediates the nuclear export of encapsidated genomic RNAs (ribonucleoproteins, RNPs). Acts as an adapter between viral RNPs complexes and the nuclear export machinery of the cell. Possesses no intrinsic RNA-binding activity, but includes a C-terminal M1-binding domain. This domain is believed to allow recognition of RNPs bound to the protein M1. Since protein M1 is not available in large quantities before late stages of infection, such an indirect recognition mechanism probably ensures that genomic RNPs are not exported from the host nucleus until sufficient quantities of viral mRNA and progeny genomic RNA have been synthesized. Furthermore, the RNPs enter the host cytoplasm only when associated with the M1 protein that is necessary to guide them to the plasma membrane. May down-regulate viral RNA synthesis when overproduced.</text>
</comment>
<comment type="subunit">
    <text evidence="1">Interacts with protein M1. May interact with host nucleoporin RAB/HRB and exportin XPO1/CRM1.</text>
</comment>
<comment type="subcellular location">
    <subcellularLocation>
        <location evidence="1">Virion</location>
    </subcellularLocation>
    <subcellularLocation>
        <location evidence="1">Host nucleus</location>
    </subcellularLocation>
</comment>
<comment type="alternative products">
    <event type="alternative splicing"/>
    <isoform>
        <id>A4GCL3-1</id>
        <name>NEP</name>
        <name>NS2</name>
        <sequence type="displayed"/>
    </isoform>
    <isoform>
        <id>A4GCL4-1</id>
        <name>NS1</name>
        <sequence type="external"/>
    </isoform>
</comment>
<comment type="miscellaneous">
    <text>Average number present in a viral particle is estimated to be 130-200 molecules.</text>
</comment>
<comment type="similarity">
    <text evidence="1">Belongs to the influenza viruses NEP family.</text>
</comment>
<dbReference type="EMBL" id="CY020465">
    <property type="protein sequence ID" value="ABO38379.1"/>
    <property type="molecule type" value="Viral_cRNA"/>
</dbReference>
<dbReference type="SMR" id="A4GCL3"/>
<dbReference type="Proteomes" id="UP000008432">
    <property type="component" value="Genome"/>
</dbReference>
<dbReference type="GO" id="GO:0042025">
    <property type="term" value="C:host cell nucleus"/>
    <property type="evidence" value="ECO:0007669"/>
    <property type="project" value="UniProtKB-SubCell"/>
</dbReference>
<dbReference type="GO" id="GO:0044423">
    <property type="term" value="C:virion component"/>
    <property type="evidence" value="ECO:0007669"/>
    <property type="project" value="UniProtKB-UniRule"/>
</dbReference>
<dbReference type="GO" id="GO:0039675">
    <property type="term" value="P:exit of virus from host cell nucleus through nuclear pore"/>
    <property type="evidence" value="ECO:0007669"/>
    <property type="project" value="UniProtKB-UniRule"/>
</dbReference>
<dbReference type="Gene3D" id="1.10.287.230">
    <property type="match status" value="1"/>
</dbReference>
<dbReference type="Gene3D" id="1.10.287.10">
    <property type="entry name" value="S15/NS1, RNA-binding"/>
    <property type="match status" value="1"/>
</dbReference>
<dbReference type="HAMAP" id="MF_04067">
    <property type="entry name" value="INFV_NEP"/>
    <property type="match status" value="1"/>
</dbReference>
<dbReference type="InterPro" id="IPR000968">
    <property type="entry name" value="Flu_NS2"/>
</dbReference>
<dbReference type="Pfam" id="PF00601">
    <property type="entry name" value="Flu_NS2"/>
    <property type="match status" value="1"/>
</dbReference>
<dbReference type="SUPFAM" id="SSF101156">
    <property type="entry name" value="Nonstructural protein ns2, Nep, M1-binding domain"/>
    <property type="match status" value="1"/>
</dbReference>
<proteinExistence type="inferred from homology"/>
<accession>A4GCL3</accession>
<organism>
    <name type="scientific">Influenza A virus (strain A/USA:Iowa/1943 H1N1)</name>
    <dbReference type="NCBI Taxonomy" id="425563"/>
    <lineage>
        <taxon>Viruses</taxon>
        <taxon>Riboviria</taxon>
        <taxon>Orthornavirae</taxon>
        <taxon>Negarnaviricota</taxon>
        <taxon>Polyploviricotina</taxon>
        <taxon>Insthoviricetes</taxon>
        <taxon>Articulavirales</taxon>
        <taxon>Orthomyxoviridae</taxon>
        <taxon>Alphainfluenzavirus</taxon>
        <taxon>Alphainfluenzavirus influenzae</taxon>
        <taxon>Influenza A virus</taxon>
    </lineage>
</organism>
<reference key="1">
    <citation type="submission" date="2007-03" db="EMBL/GenBank/DDBJ databases">
        <title>The NIAID influenza genome sequencing project.</title>
        <authorList>
            <person name="Ghedin E."/>
            <person name="Spiro D."/>
            <person name="Miller N."/>
            <person name="Zaborsky J."/>
            <person name="Feldblyum T."/>
            <person name="Subbu V."/>
            <person name="Shumway M."/>
            <person name="Sparenborg J."/>
            <person name="Groveman L."/>
            <person name="Halpin R."/>
            <person name="Sitz J."/>
            <person name="Koo H."/>
            <person name="Salzberg S.L."/>
            <person name="Webster R.G."/>
            <person name="Hoffmann E."/>
            <person name="Krauss S."/>
            <person name="Naeve C."/>
            <person name="Bao Y."/>
            <person name="Bolotov P."/>
            <person name="Dernovoy D."/>
            <person name="Kiryutin B."/>
            <person name="Lipman D.J."/>
            <person name="Tatusova T."/>
        </authorList>
    </citation>
    <scope>NUCLEOTIDE SEQUENCE [GENOMIC RNA]</scope>
</reference>
<reference key="2">
    <citation type="submission" date="2007-03" db="EMBL/GenBank/DDBJ databases">
        <authorList>
            <consortium name="The NIAID Influenza Genome Sequencing Consortium"/>
        </authorList>
    </citation>
    <scope>NUCLEOTIDE SEQUENCE [GENOMIC RNA]</scope>
</reference>
<sequence length="121" mass="14345">MDPNTVSSFQDILMRMSKMQLGSSSEDLNGMITQFESLKLYRDSLGEAVMRMGDLHSLQNRNGKWREQLGQKFEEIRWLIEEVRHRLKITENSFEQITFMQALQLLLEVEQEIRTFSFQLI</sequence>
<keyword id="KW-0025">Alternative splicing</keyword>
<keyword id="KW-1048">Host nucleus</keyword>
<keyword id="KW-0945">Host-virus interaction</keyword>
<keyword id="KW-0813">Transport</keyword>
<keyword id="KW-0946">Virion</keyword>
<feature type="chain" id="PRO_0000372951" description="Nuclear export protein">
    <location>
        <begin position="1"/>
        <end position="121"/>
    </location>
</feature>
<feature type="short sequence motif" description="Nuclear export signal" evidence="1">
    <location>
        <begin position="12"/>
        <end position="21"/>
    </location>
</feature>
<feature type="short sequence motif" description="Nuclear export signal" evidence="1">
    <location>
        <begin position="85"/>
        <end position="94"/>
    </location>
</feature>
<gene>
    <name evidence="1" type="primary">NS</name>
</gene>
<evidence type="ECO:0000255" key="1">
    <source>
        <dbReference type="HAMAP-Rule" id="MF_04067"/>
    </source>
</evidence>